<comment type="function">
    <text evidence="2">Catalyzes the formation of N(7)-methylguanine at position 46 (m7G46) in tRNA.</text>
</comment>
<comment type="catalytic activity">
    <reaction evidence="2">
        <text>guanosine(46) in tRNA + S-adenosyl-L-methionine = N(7)-methylguanosine(46) in tRNA + S-adenosyl-L-homocysteine</text>
        <dbReference type="Rhea" id="RHEA:42708"/>
        <dbReference type="Rhea" id="RHEA-COMP:10188"/>
        <dbReference type="Rhea" id="RHEA-COMP:10189"/>
        <dbReference type="ChEBI" id="CHEBI:57856"/>
        <dbReference type="ChEBI" id="CHEBI:59789"/>
        <dbReference type="ChEBI" id="CHEBI:74269"/>
        <dbReference type="ChEBI" id="CHEBI:74480"/>
        <dbReference type="EC" id="2.1.1.33"/>
    </reaction>
</comment>
<comment type="pathway">
    <text evidence="2">tRNA modification; N(7)-methylguanine-tRNA biosynthesis.</text>
</comment>
<comment type="similarity">
    <text evidence="2">Belongs to the class I-like SAM-binding methyltransferase superfamily. TrmB family.</text>
</comment>
<comment type="sequence caution" evidence="4">
    <conflict type="erroneous initiation">
        <sequence resource="EMBL-CDS" id="AAK22037"/>
    </conflict>
</comment>
<keyword id="KW-0489">Methyltransferase</keyword>
<keyword id="KW-1185">Reference proteome</keyword>
<keyword id="KW-0949">S-adenosyl-L-methionine</keyword>
<keyword id="KW-0808">Transferase</keyword>
<keyword id="KW-0819">tRNA processing</keyword>
<evidence type="ECO:0000250" key="1"/>
<evidence type="ECO:0000255" key="2">
    <source>
        <dbReference type="HAMAP-Rule" id="MF_01057"/>
    </source>
</evidence>
<evidence type="ECO:0000256" key="3">
    <source>
        <dbReference type="SAM" id="MobiDB-lite"/>
    </source>
</evidence>
<evidence type="ECO:0000305" key="4"/>
<sequence length="226" mass="25322">MTTPQQPHGPLRSFGRLKSRPVKPRQQALLDTLLPEIAVPTGPFQPLDLMPEAKAVWLEIGFGGGEHMASQAGRNPETLVIGAEPFVNGVASAVRHVEEQALKNVRIHEGDARDVVDWLPDACLDRVFIMFPDPWHKARHNKRRLIQPEFVAKLARVMKPGAALRFATDWADYAEWTTERVLADPSFRFADEAADRNAIPADHVTTRYEEKKLGDCAPVFLDFTRG</sequence>
<reference key="1">
    <citation type="journal article" date="2001" name="Proc. Natl. Acad. Sci. U.S.A.">
        <title>Complete genome sequence of Caulobacter crescentus.</title>
        <authorList>
            <person name="Nierman W.C."/>
            <person name="Feldblyum T.V."/>
            <person name="Laub M.T."/>
            <person name="Paulsen I.T."/>
            <person name="Nelson K.E."/>
            <person name="Eisen J.A."/>
            <person name="Heidelberg J.F."/>
            <person name="Alley M.R.K."/>
            <person name="Ohta N."/>
            <person name="Maddock J.R."/>
            <person name="Potocka I."/>
            <person name="Nelson W.C."/>
            <person name="Newton A."/>
            <person name="Stephens C."/>
            <person name="Phadke N.D."/>
            <person name="Ely B."/>
            <person name="DeBoy R.T."/>
            <person name="Dodson R.J."/>
            <person name="Durkin A.S."/>
            <person name="Gwinn M.L."/>
            <person name="Haft D.H."/>
            <person name="Kolonay J.F."/>
            <person name="Smit J."/>
            <person name="Craven M.B."/>
            <person name="Khouri H.M."/>
            <person name="Shetty J."/>
            <person name="Berry K.J."/>
            <person name="Utterback T.R."/>
            <person name="Tran K."/>
            <person name="Wolf A.M."/>
            <person name="Vamathevan J.J."/>
            <person name="Ermolaeva M.D."/>
            <person name="White O."/>
            <person name="Salzberg S.L."/>
            <person name="Venter J.C."/>
            <person name="Shapiro L."/>
            <person name="Fraser C.M."/>
        </authorList>
    </citation>
    <scope>NUCLEOTIDE SEQUENCE [LARGE SCALE GENOMIC DNA]</scope>
    <source>
        <strain>ATCC 19089 / CIP 103742 / CB 15</strain>
    </source>
</reference>
<feature type="chain" id="PRO_0000171313" description="tRNA (guanine-N(7)-)-methyltransferase">
    <location>
        <begin position="1"/>
        <end position="226"/>
    </location>
</feature>
<feature type="region of interest" description="Disordered" evidence="3">
    <location>
        <begin position="1"/>
        <end position="22"/>
    </location>
</feature>
<feature type="region of interest" description="Interaction with RNA" evidence="2">
    <location>
        <begin position="139"/>
        <end position="144"/>
    </location>
</feature>
<feature type="active site" evidence="1">
    <location>
        <position position="133"/>
    </location>
</feature>
<feature type="binding site" evidence="2">
    <location>
        <position position="59"/>
    </location>
    <ligand>
        <name>S-adenosyl-L-methionine</name>
        <dbReference type="ChEBI" id="CHEBI:59789"/>
    </ligand>
</feature>
<feature type="binding site" evidence="2">
    <location>
        <position position="84"/>
    </location>
    <ligand>
        <name>S-adenosyl-L-methionine</name>
        <dbReference type="ChEBI" id="CHEBI:59789"/>
    </ligand>
</feature>
<feature type="binding site" evidence="2">
    <location>
        <position position="111"/>
    </location>
    <ligand>
        <name>S-adenosyl-L-methionine</name>
        <dbReference type="ChEBI" id="CHEBI:59789"/>
    </ligand>
</feature>
<feature type="binding site" evidence="2">
    <location>
        <position position="133"/>
    </location>
    <ligand>
        <name>S-adenosyl-L-methionine</name>
        <dbReference type="ChEBI" id="CHEBI:59789"/>
    </ligand>
</feature>
<feature type="binding site" evidence="2">
    <location>
        <position position="137"/>
    </location>
    <ligand>
        <name>substrate</name>
    </ligand>
</feature>
<feature type="binding site" evidence="2">
    <location>
        <position position="169"/>
    </location>
    <ligand>
        <name>substrate</name>
    </ligand>
</feature>
<feature type="binding site" evidence="2">
    <location>
        <begin position="206"/>
        <end position="209"/>
    </location>
    <ligand>
        <name>substrate</name>
    </ligand>
</feature>
<protein>
    <recommendedName>
        <fullName evidence="2">tRNA (guanine-N(7)-)-methyltransferase</fullName>
        <ecNumber evidence="2">2.1.1.33</ecNumber>
    </recommendedName>
    <alternativeName>
        <fullName evidence="2">tRNA (guanine(46)-N(7))-methyltransferase</fullName>
    </alternativeName>
    <alternativeName>
        <fullName evidence="2">tRNA(m7G46)-methyltransferase</fullName>
    </alternativeName>
</protein>
<dbReference type="EC" id="2.1.1.33" evidence="2"/>
<dbReference type="EMBL" id="AE005673">
    <property type="protein sequence ID" value="AAK22037.1"/>
    <property type="status" value="ALT_INIT"/>
    <property type="molecule type" value="Genomic_DNA"/>
</dbReference>
<dbReference type="PIR" id="A87255">
    <property type="entry name" value="A87255"/>
</dbReference>
<dbReference type="RefSeq" id="NP_418869.1">
    <property type="nucleotide sequence ID" value="NC_002696.2"/>
</dbReference>
<dbReference type="RefSeq" id="WP_012639863.1">
    <property type="nucleotide sequence ID" value="NC_002696.2"/>
</dbReference>
<dbReference type="SMR" id="P58088"/>
<dbReference type="STRING" id="190650.CC_0049"/>
<dbReference type="EnsemblBacteria" id="AAK22037">
    <property type="protein sequence ID" value="AAK22037"/>
    <property type="gene ID" value="CC_0049"/>
</dbReference>
<dbReference type="KEGG" id="ccr:CC_0049"/>
<dbReference type="PATRIC" id="fig|190650.5.peg.47"/>
<dbReference type="eggNOG" id="COG0220">
    <property type="taxonomic scope" value="Bacteria"/>
</dbReference>
<dbReference type="HOGENOM" id="CLU_050910_0_3_5"/>
<dbReference type="UniPathway" id="UPA00989"/>
<dbReference type="Proteomes" id="UP000001816">
    <property type="component" value="Chromosome"/>
</dbReference>
<dbReference type="GO" id="GO:0043527">
    <property type="term" value="C:tRNA methyltransferase complex"/>
    <property type="evidence" value="ECO:0007669"/>
    <property type="project" value="TreeGrafter"/>
</dbReference>
<dbReference type="GO" id="GO:0008176">
    <property type="term" value="F:tRNA (guanine(46)-N7)-methyltransferase activity"/>
    <property type="evidence" value="ECO:0007669"/>
    <property type="project" value="UniProtKB-UniRule"/>
</dbReference>
<dbReference type="CDD" id="cd02440">
    <property type="entry name" value="AdoMet_MTases"/>
    <property type="match status" value="1"/>
</dbReference>
<dbReference type="Gene3D" id="3.40.50.150">
    <property type="entry name" value="Vaccinia Virus protein VP39"/>
    <property type="match status" value="1"/>
</dbReference>
<dbReference type="HAMAP" id="MF_01057">
    <property type="entry name" value="tRNA_methyltr_TrmB"/>
    <property type="match status" value="1"/>
</dbReference>
<dbReference type="InterPro" id="IPR029063">
    <property type="entry name" value="SAM-dependent_MTases_sf"/>
</dbReference>
<dbReference type="InterPro" id="IPR003358">
    <property type="entry name" value="tRNA_(Gua-N-7)_MeTrfase_Trmb"/>
</dbReference>
<dbReference type="InterPro" id="IPR055361">
    <property type="entry name" value="tRNA_methyltr_TrmB_bact"/>
</dbReference>
<dbReference type="NCBIfam" id="TIGR00091">
    <property type="entry name" value="tRNA (guanosine(46)-N7)-methyltransferase TrmB"/>
    <property type="match status" value="1"/>
</dbReference>
<dbReference type="PANTHER" id="PTHR23417">
    <property type="entry name" value="3-DEOXY-D-MANNO-OCTULOSONIC-ACID TRANSFERASE/TRNA GUANINE-N 7 - -METHYLTRANSFERASE"/>
    <property type="match status" value="1"/>
</dbReference>
<dbReference type="PANTHER" id="PTHR23417:SF14">
    <property type="entry name" value="PENTACOTRIPEPTIDE-REPEAT REGION OF PRORP DOMAIN-CONTAINING PROTEIN"/>
    <property type="match status" value="1"/>
</dbReference>
<dbReference type="Pfam" id="PF02390">
    <property type="entry name" value="Methyltransf_4"/>
    <property type="match status" value="1"/>
</dbReference>
<dbReference type="SUPFAM" id="SSF53335">
    <property type="entry name" value="S-adenosyl-L-methionine-dependent methyltransferases"/>
    <property type="match status" value="1"/>
</dbReference>
<dbReference type="PROSITE" id="PS51625">
    <property type="entry name" value="SAM_MT_TRMB"/>
    <property type="match status" value="1"/>
</dbReference>
<organism>
    <name type="scientific">Caulobacter vibrioides (strain ATCC 19089 / CIP 103742 / CB 15)</name>
    <name type="common">Caulobacter crescentus</name>
    <dbReference type="NCBI Taxonomy" id="190650"/>
    <lineage>
        <taxon>Bacteria</taxon>
        <taxon>Pseudomonadati</taxon>
        <taxon>Pseudomonadota</taxon>
        <taxon>Alphaproteobacteria</taxon>
        <taxon>Caulobacterales</taxon>
        <taxon>Caulobacteraceae</taxon>
        <taxon>Caulobacter</taxon>
    </lineage>
</organism>
<gene>
    <name evidence="2" type="primary">trmB</name>
    <name type="ordered locus">CC_0049</name>
</gene>
<accession>P58088</accession>
<proteinExistence type="inferred from homology"/>
<name>TRMB_CAUVC</name>